<comment type="function">
    <text evidence="2">Component of the ubiquinol-cytochrome c reductase complex (complex III or cytochrome b-c1 complex) that is part of the mitochondrial respiratory chain. The b-c1 complex mediates electron transfer from ubiquinol to cytochrome c. Contributes to the generation of a proton gradient across the mitochondrial membrane that is then used for ATP synthesis.</text>
</comment>
<comment type="cofactor">
    <cofactor evidence="2">
        <name>heme b</name>
        <dbReference type="ChEBI" id="CHEBI:60344"/>
    </cofactor>
    <text evidence="2">Binds 2 heme b groups non-covalently.</text>
</comment>
<comment type="subunit">
    <text evidence="2">The cytochrome bc1 complex contains 11 subunits: 3 respiratory subunits (MT-CYB, CYC1 and UQCRFS1), 2 core proteins (UQCRC1 and UQCRC2) and 6 low-molecular weight proteins (UQCRH/QCR6, UQCRB/QCR7, UQCRQ/QCR8, UQCR10/QCR9, UQCR11/QCR10 and a cleavage product of UQCRFS1). This cytochrome bc1 complex then forms a dimer.</text>
</comment>
<comment type="subcellular location">
    <subcellularLocation>
        <location evidence="2">Mitochondrion inner membrane</location>
        <topology evidence="2">Multi-pass membrane protein</topology>
    </subcellularLocation>
</comment>
<comment type="miscellaneous">
    <text evidence="1">Heme 1 (or BL or b562) is low-potential and absorbs at about 562 nm, and heme 2 (or BH or b566) is high-potential and absorbs at about 566 nm.</text>
</comment>
<comment type="similarity">
    <text evidence="3 4">Belongs to the cytochrome b family.</text>
</comment>
<comment type="caution">
    <text evidence="2">The full-length protein contains only eight transmembrane helices, not nine as predicted by bioinformatics tools.</text>
</comment>
<proteinExistence type="inferred from homology"/>
<dbReference type="EMBL" id="AY960979">
    <property type="protein sequence ID" value="AAX50162.1"/>
    <property type="molecule type" value="Genomic_DNA"/>
</dbReference>
<dbReference type="SMR" id="Q58F82"/>
<dbReference type="GO" id="GO:0005743">
    <property type="term" value="C:mitochondrial inner membrane"/>
    <property type="evidence" value="ECO:0007669"/>
    <property type="project" value="UniProtKB-SubCell"/>
</dbReference>
<dbReference type="GO" id="GO:0045275">
    <property type="term" value="C:respiratory chain complex III"/>
    <property type="evidence" value="ECO:0007669"/>
    <property type="project" value="InterPro"/>
</dbReference>
<dbReference type="GO" id="GO:0046872">
    <property type="term" value="F:metal ion binding"/>
    <property type="evidence" value="ECO:0007669"/>
    <property type="project" value="UniProtKB-KW"/>
</dbReference>
<dbReference type="GO" id="GO:0008121">
    <property type="term" value="F:ubiquinol-cytochrome-c reductase activity"/>
    <property type="evidence" value="ECO:0007669"/>
    <property type="project" value="InterPro"/>
</dbReference>
<dbReference type="GO" id="GO:0006122">
    <property type="term" value="P:mitochondrial electron transport, ubiquinol to cytochrome c"/>
    <property type="evidence" value="ECO:0007669"/>
    <property type="project" value="TreeGrafter"/>
</dbReference>
<dbReference type="CDD" id="cd00290">
    <property type="entry name" value="cytochrome_b_C"/>
    <property type="match status" value="1"/>
</dbReference>
<dbReference type="CDD" id="cd00284">
    <property type="entry name" value="Cytochrome_b_N"/>
    <property type="match status" value="1"/>
</dbReference>
<dbReference type="FunFam" id="1.20.810.10:FF:000002">
    <property type="entry name" value="Cytochrome b"/>
    <property type="match status" value="1"/>
</dbReference>
<dbReference type="Gene3D" id="1.20.810.10">
    <property type="entry name" value="Cytochrome Bc1 Complex, Chain C"/>
    <property type="match status" value="1"/>
</dbReference>
<dbReference type="InterPro" id="IPR005798">
    <property type="entry name" value="Cyt_b/b6_C"/>
</dbReference>
<dbReference type="InterPro" id="IPR036150">
    <property type="entry name" value="Cyt_b/b6_C_sf"/>
</dbReference>
<dbReference type="InterPro" id="IPR005797">
    <property type="entry name" value="Cyt_b/b6_N"/>
</dbReference>
<dbReference type="InterPro" id="IPR027387">
    <property type="entry name" value="Cytb/b6-like_sf"/>
</dbReference>
<dbReference type="InterPro" id="IPR030689">
    <property type="entry name" value="Cytochrome_b"/>
</dbReference>
<dbReference type="InterPro" id="IPR048260">
    <property type="entry name" value="Cytochrome_b_C_euk/bac"/>
</dbReference>
<dbReference type="InterPro" id="IPR048259">
    <property type="entry name" value="Cytochrome_b_N_euk/bac"/>
</dbReference>
<dbReference type="InterPro" id="IPR016174">
    <property type="entry name" value="Di-haem_cyt_TM"/>
</dbReference>
<dbReference type="PANTHER" id="PTHR19271">
    <property type="entry name" value="CYTOCHROME B"/>
    <property type="match status" value="1"/>
</dbReference>
<dbReference type="PANTHER" id="PTHR19271:SF16">
    <property type="entry name" value="CYTOCHROME B"/>
    <property type="match status" value="1"/>
</dbReference>
<dbReference type="Pfam" id="PF00032">
    <property type="entry name" value="Cytochrom_B_C"/>
    <property type="match status" value="1"/>
</dbReference>
<dbReference type="Pfam" id="PF00033">
    <property type="entry name" value="Cytochrome_B"/>
    <property type="match status" value="1"/>
</dbReference>
<dbReference type="PIRSF" id="PIRSF038885">
    <property type="entry name" value="COB"/>
    <property type="match status" value="1"/>
</dbReference>
<dbReference type="SUPFAM" id="SSF81648">
    <property type="entry name" value="a domain/subunit of cytochrome bc1 complex (Ubiquinol-cytochrome c reductase)"/>
    <property type="match status" value="1"/>
</dbReference>
<dbReference type="SUPFAM" id="SSF81342">
    <property type="entry name" value="Transmembrane di-heme cytochromes"/>
    <property type="match status" value="1"/>
</dbReference>
<dbReference type="PROSITE" id="PS51003">
    <property type="entry name" value="CYTB_CTER"/>
    <property type="match status" value="1"/>
</dbReference>
<dbReference type="PROSITE" id="PS51002">
    <property type="entry name" value="CYTB_NTER"/>
    <property type="match status" value="1"/>
</dbReference>
<organism>
    <name type="scientific">Bradypus tridactylus</name>
    <name type="common">Pale-throated three-toed sloth</name>
    <dbReference type="NCBI Taxonomy" id="9354"/>
    <lineage>
        <taxon>Eukaryota</taxon>
        <taxon>Metazoa</taxon>
        <taxon>Chordata</taxon>
        <taxon>Craniata</taxon>
        <taxon>Vertebrata</taxon>
        <taxon>Euteleostomi</taxon>
        <taxon>Mammalia</taxon>
        <taxon>Eutheria</taxon>
        <taxon>Xenarthra</taxon>
        <taxon>Pilosa</taxon>
        <taxon>Folivora</taxon>
        <taxon>Bradypodidae</taxon>
        <taxon>Bradypus</taxon>
    </lineage>
</organism>
<evidence type="ECO:0000250" key="1"/>
<evidence type="ECO:0000250" key="2">
    <source>
        <dbReference type="UniProtKB" id="P00157"/>
    </source>
</evidence>
<evidence type="ECO:0000255" key="3">
    <source>
        <dbReference type="PROSITE-ProRule" id="PRU00967"/>
    </source>
</evidence>
<evidence type="ECO:0000255" key="4">
    <source>
        <dbReference type="PROSITE-ProRule" id="PRU00968"/>
    </source>
</evidence>
<sequence length="379" mass="42539">MTNIRKTHPLLKPINHALIDLPTPSNISTWWNLGSLLGTCLIMQILTGLFLAMHYSSDTTTAFSSIAHICRDVNYGWTIRHLHANGASMFFMCLYLHIGRNLYYGSYSYLETWNTGVMLLLTVMATAFMGYVLPWGQMSFWGATVITNLLSAIPYIGTDLVEWIWGGFSIEKATLTRFFTLHFIAPFIILALVLTHLLFLHETGSNNPLGISSNSDKIPFHPYHTIKDILGLLIMILTTLALTLLHPDLLGDPNNYTPANPLNTPPHIKPEWYFLFAYTILRSTPSKLGGVLTLICSILVLVIIPMTHTAKQRSLTFRPISQCLFWILTADLLILTWIGGQPMDPPFTTIGLLASILYFTTILILTPTAGLIENNLMKW</sequence>
<name>CYB_BRATR</name>
<protein>
    <recommendedName>
        <fullName>Cytochrome b</fullName>
    </recommendedName>
    <alternativeName>
        <fullName>Complex III subunit 3</fullName>
    </alternativeName>
    <alternativeName>
        <fullName>Complex III subunit III</fullName>
    </alternativeName>
    <alternativeName>
        <fullName>Cytochrome b-c1 complex subunit 3</fullName>
    </alternativeName>
    <alternativeName>
        <fullName>Ubiquinol-cytochrome-c reductase complex cytochrome b subunit</fullName>
    </alternativeName>
</protein>
<reference key="1">
    <citation type="submission" date="2005-03" db="EMBL/GenBank/DDBJ databases">
        <authorList>
            <person name="McLenachan P."/>
            <person name="Penny D."/>
        </authorList>
    </citation>
    <scope>NUCLEOTIDE SEQUENCE [GENOMIC DNA]</scope>
</reference>
<gene>
    <name type="primary">MT-CYB</name>
    <name type="synonym">COB</name>
    <name type="synonym">CYTB</name>
    <name type="synonym">MTCYB</name>
</gene>
<keyword id="KW-0249">Electron transport</keyword>
<keyword id="KW-0349">Heme</keyword>
<keyword id="KW-0408">Iron</keyword>
<keyword id="KW-0472">Membrane</keyword>
<keyword id="KW-0479">Metal-binding</keyword>
<keyword id="KW-0496">Mitochondrion</keyword>
<keyword id="KW-0999">Mitochondrion inner membrane</keyword>
<keyword id="KW-0679">Respiratory chain</keyword>
<keyword id="KW-0812">Transmembrane</keyword>
<keyword id="KW-1133">Transmembrane helix</keyword>
<keyword id="KW-0813">Transport</keyword>
<keyword id="KW-0830">Ubiquinone</keyword>
<geneLocation type="mitochondrion"/>
<feature type="chain" id="PRO_0000254782" description="Cytochrome b">
    <location>
        <begin position="1"/>
        <end position="379"/>
    </location>
</feature>
<feature type="transmembrane region" description="Helical" evidence="2">
    <location>
        <begin position="33"/>
        <end position="53"/>
    </location>
</feature>
<feature type="transmembrane region" description="Helical" evidence="2">
    <location>
        <begin position="77"/>
        <end position="98"/>
    </location>
</feature>
<feature type="transmembrane region" description="Helical" evidence="2">
    <location>
        <begin position="113"/>
        <end position="133"/>
    </location>
</feature>
<feature type="transmembrane region" description="Helical" evidence="2">
    <location>
        <begin position="178"/>
        <end position="198"/>
    </location>
</feature>
<feature type="transmembrane region" description="Helical" evidence="2">
    <location>
        <begin position="226"/>
        <end position="246"/>
    </location>
</feature>
<feature type="transmembrane region" description="Helical" evidence="2">
    <location>
        <begin position="288"/>
        <end position="308"/>
    </location>
</feature>
<feature type="transmembrane region" description="Helical" evidence="2">
    <location>
        <begin position="320"/>
        <end position="340"/>
    </location>
</feature>
<feature type="transmembrane region" description="Helical" evidence="2">
    <location>
        <begin position="347"/>
        <end position="367"/>
    </location>
</feature>
<feature type="binding site" description="axial binding residue" evidence="2">
    <location>
        <position position="83"/>
    </location>
    <ligand>
        <name>heme b</name>
        <dbReference type="ChEBI" id="CHEBI:60344"/>
        <label>b562</label>
    </ligand>
    <ligandPart>
        <name>Fe</name>
        <dbReference type="ChEBI" id="CHEBI:18248"/>
    </ligandPart>
</feature>
<feature type="binding site" description="axial binding residue" evidence="2">
    <location>
        <position position="97"/>
    </location>
    <ligand>
        <name>heme b</name>
        <dbReference type="ChEBI" id="CHEBI:60344"/>
        <label>b566</label>
    </ligand>
    <ligandPart>
        <name>Fe</name>
        <dbReference type="ChEBI" id="CHEBI:18248"/>
    </ligandPart>
</feature>
<feature type="binding site" description="axial binding residue" evidence="2">
    <location>
        <position position="182"/>
    </location>
    <ligand>
        <name>heme b</name>
        <dbReference type="ChEBI" id="CHEBI:60344"/>
        <label>b562</label>
    </ligand>
    <ligandPart>
        <name>Fe</name>
        <dbReference type="ChEBI" id="CHEBI:18248"/>
    </ligandPart>
</feature>
<feature type="binding site" description="axial binding residue" evidence="2">
    <location>
        <position position="196"/>
    </location>
    <ligand>
        <name>heme b</name>
        <dbReference type="ChEBI" id="CHEBI:60344"/>
        <label>b566</label>
    </ligand>
    <ligandPart>
        <name>Fe</name>
        <dbReference type="ChEBI" id="CHEBI:18248"/>
    </ligandPart>
</feature>
<feature type="binding site" evidence="2">
    <location>
        <position position="201"/>
    </location>
    <ligand>
        <name>a ubiquinone</name>
        <dbReference type="ChEBI" id="CHEBI:16389"/>
    </ligand>
</feature>
<accession>Q58F82</accession>